<comment type="function">
    <text evidence="1">Catalyzes the transfer of a dimethylallyl group onto the adenine at position 37 in tRNAs that read codons beginning with uridine, leading to the formation of N6-(dimethylallyl)adenosine (i(6)A).</text>
</comment>
<comment type="catalytic activity">
    <reaction evidence="1">
        <text>adenosine(37) in tRNA + dimethylallyl diphosphate = N(6)-dimethylallyladenosine(37) in tRNA + diphosphate</text>
        <dbReference type="Rhea" id="RHEA:26482"/>
        <dbReference type="Rhea" id="RHEA-COMP:10162"/>
        <dbReference type="Rhea" id="RHEA-COMP:10375"/>
        <dbReference type="ChEBI" id="CHEBI:33019"/>
        <dbReference type="ChEBI" id="CHEBI:57623"/>
        <dbReference type="ChEBI" id="CHEBI:74411"/>
        <dbReference type="ChEBI" id="CHEBI:74415"/>
        <dbReference type="EC" id="2.5.1.75"/>
    </reaction>
</comment>
<comment type="cofactor">
    <cofactor evidence="1">
        <name>Mg(2+)</name>
        <dbReference type="ChEBI" id="CHEBI:18420"/>
    </cofactor>
</comment>
<comment type="subunit">
    <text evidence="1">Monomer.</text>
</comment>
<comment type="similarity">
    <text evidence="1">Belongs to the IPP transferase family.</text>
</comment>
<name>MIAA_COREF</name>
<sequence length="301" mass="33536">MITPIAVVGPTASGKSALGIELALRLDGEVVNVDSMQLYRGMDIGTAKLTPEERQGIPHHQLDVLDVTETASVARYQQEAVADVEEIMSRGKTPILVGGSMLYVQSLVDDWQFPPTDPAVRARWEARLAEIGVTRLHEELRARDPEAAAIIENNDPRRTVRALEVIELTGQPFKASQPPKDAPPRWGTTILGLRTTADWLNPRIELRTHLMFERGFLEEVEGLVRDHGLIAESTAGRAIGYAQVLDALAGELTLDEAVERTITGTRRYVRRQRAWFNRDHRIRWIDADGDTTARALDILGR</sequence>
<protein>
    <recommendedName>
        <fullName evidence="1">tRNA dimethylallyltransferase</fullName>
        <ecNumber evidence="1">2.5.1.75</ecNumber>
    </recommendedName>
    <alternativeName>
        <fullName evidence="1">Dimethylallyl diphosphate:tRNA dimethylallyltransferase</fullName>
        <shortName evidence="1">DMAPP:tRNA dimethylallyltransferase</shortName>
        <shortName evidence="1">DMATase</shortName>
    </alternativeName>
    <alternativeName>
        <fullName evidence="1">Isopentenyl-diphosphate:tRNA isopentenyltransferase</fullName>
        <shortName evidence="1">IPP transferase</shortName>
        <shortName evidence="1">IPPT</shortName>
        <shortName evidence="1">IPTase</shortName>
    </alternativeName>
</protein>
<accession>Q8FPE0</accession>
<feature type="chain" id="PRO_0000163907" description="tRNA dimethylallyltransferase">
    <location>
        <begin position="1"/>
        <end position="301"/>
    </location>
</feature>
<feature type="region of interest" description="Interaction with substrate tRNA" evidence="1">
    <location>
        <begin position="34"/>
        <end position="37"/>
    </location>
</feature>
<feature type="binding site" evidence="1">
    <location>
        <begin position="9"/>
        <end position="16"/>
    </location>
    <ligand>
        <name>ATP</name>
        <dbReference type="ChEBI" id="CHEBI:30616"/>
    </ligand>
</feature>
<feature type="binding site" evidence="1">
    <location>
        <begin position="11"/>
        <end position="16"/>
    </location>
    <ligand>
        <name>substrate</name>
    </ligand>
</feature>
<feature type="site" description="Interaction with substrate tRNA" evidence="1">
    <location>
        <position position="100"/>
    </location>
</feature>
<feature type="site" description="Interaction with substrate tRNA" evidence="1">
    <location>
        <position position="121"/>
    </location>
</feature>
<proteinExistence type="inferred from homology"/>
<gene>
    <name evidence="1" type="primary">miaA</name>
    <name type="ordered locus">CE1838</name>
</gene>
<organism>
    <name type="scientific">Corynebacterium efficiens (strain DSM 44549 / YS-314 / AJ 12310 / JCM 11189 / NBRC 100395)</name>
    <dbReference type="NCBI Taxonomy" id="196164"/>
    <lineage>
        <taxon>Bacteria</taxon>
        <taxon>Bacillati</taxon>
        <taxon>Actinomycetota</taxon>
        <taxon>Actinomycetes</taxon>
        <taxon>Mycobacteriales</taxon>
        <taxon>Corynebacteriaceae</taxon>
        <taxon>Corynebacterium</taxon>
    </lineage>
</organism>
<keyword id="KW-0067">ATP-binding</keyword>
<keyword id="KW-0460">Magnesium</keyword>
<keyword id="KW-0547">Nucleotide-binding</keyword>
<keyword id="KW-1185">Reference proteome</keyword>
<keyword id="KW-0808">Transferase</keyword>
<keyword id="KW-0819">tRNA processing</keyword>
<reference key="1">
    <citation type="journal article" date="2003" name="Genome Res.">
        <title>Comparative complete genome sequence analysis of the amino acid replacements responsible for the thermostability of Corynebacterium efficiens.</title>
        <authorList>
            <person name="Nishio Y."/>
            <person name="Nakamura Y."/>
            <person name="Kawarabayasi Y."/>
            <person name="Usuda Y."/>
            <person name="Kimura E."/>
            <person name="Sugimoto S."/>
            <person name="Matsui K."/>
            <person name="Yamagishi A."/>
            <person name="Kikuchi H."/>
            <person name="Ikeo K."/>
            <person name="Gojobori T."/>
        </authorList>
    </citation>
    <scope>NUCLEOTIDE SEQUENCE [LARGE SCALE GENOMIC DNA]</scope>
    <source>
        <strain>DSM 44549 / YS-314 / AJ 12310 / JCM 11189 / NBRC 100395</strain>
    </source>
</reference>
<dbReference type="EC" id="2.5.1.75" evidence="1"/>
<dbReference type="EMBL" id="BA000035">
    <property type="protein sequence ID" value="BAC18648.1"/>
    <property type="molecule type" value="Genomic_DNA"/>
</dbReference>
<dbReference type="RefSeq" id="WP_006767837.1">
    <property type="nucleotide sequence ID" value="NC_004369.1"/>
</dbReference>
<dbReference type="SMR" id="Q8FPE0"/>
<dbReference type="STRING" id="196164.gene:10742266"/>
<dbReference type="KEGG" id="cef:CE1838"/>
<dbReference type="eggNOG" id="COG0324">
    <property type="taxonomic scope" value="Bacteria"/>
</dbReference>
<dbReference type="HOGENOM" id="CLU_032616_0_1_11"/>
<dbReference type="OrthoDB" id="9776390at2"/>
<dbReference type="Proteomes" id="UP000001409">
    <property type="component" value="Chromosome"/>
</dbReference>
<dbReference type="GO" id="GO:0005524">
    <property type="term" value="F:ATP binding"/>
    <property type="evidence" value="ECO:0007669"/>
    <property type="project" value="UniProtKB-UniRule"/>
</dbReference>
<dbReference type="GO" id="GO:0052381">
    <property type="term" value="F:tRNA dimethylallyltransferase activity"/>
    <property type="evidence" value="ECO:0007669"/>
    <property type="project" value="UniProtKB-UniRule"/>
</dbReference>
<dbReference type="GO" id="GO:0006400">
    <property type="term" value="P:tRNA modification"/>
    <property type="evidence" value="ECO:0007669"/>
    <property type="project" value="TreeGrafter"/>
</dbReference>
<dbReference type="FunFam" id="1.10.20.140:FF:000001">
    <property type="entry name" value="tRNA dimethylallyltransferase"/>
    <property type="match status" value="1"/>
</dbReference>
<dbReference type="Gene3D" id="1.10.20.140">
    <property type="match status" value="1"/>
</dbReference>
<dbReference type="Gene3D" id="3.40.50.300">
    <property type="entry name" value="P-loop containing nucleotide triphosphate hydrolases"/>
    <property type="match status" value="1"/>
</dbReference>
<dbReference type="HAMAP" id="MF_00185">
    <property type="entry name" value="IPP_trans"/>
    <property type="match status" value="1"/>
</dbReference>
<dbReference type="InterPro" id="IPR039657">
    <property type="entry name" value="Dimethylallyltransferase"/>
</dbReference>
<dbReference type="InterPro" id="IPR018022">
    <property type="entry name" value="IPT"/>
</dbReference>
<dbReference type="InterPro" id="IPR027417">
    <property type="entry name" value="P-loop_NTPase"/>
</dbReference>
<dbReference type="NCBIfam" id="TIGR00174">
    <property type="entry name" value="miaA"/>
    <property type="match status" value="1"/>
</dbReference>
<dbReference type="PANTHER" id="PTHR11088">
    <property type="entry name" value="TRNA DIMETHYLALLYLTRANSFERASE"/>
    <property type="match status" value="1"/>
</dbReference>
<dbReference type="PANTHER" id="PTHR11088:SF60">
    <property type="entry name" value="TRNA DIMETHYLALLYLTRANSFERASE"/>
    <property type="match status" value="1"/>
</dbReference>
<dbReference type="Pfam" id="PF01715">
    <property type="entry name" value="IPPT"/>
    <property type="match status" value="1"/>
</dbReference>
<dbReference type="SUPFAM" id="SSF52540">
    <property type="entry name" value="P-loop containing nucleoside triphosphate hydrolases"/>
    <property type="match status" value="1"/>
</dbReference>
<evidence type="ECO:0000255" key="1">
    <source>
        <dbReference type="HAMAP-Rule" id="MF_00185"/>
    </source>
</evidence>